<gene>
    <name evidence="1" type="primary">ruvC</name>
    <name type="ordered locus">YE2394</name>
</gene>
<protein>
    <recommendedName>
        <fullName evidence="1">Crossover junction endodeoxyribonuclease RuvC</fullName>
        <ecNumber evidence="1">3.1.21.10</ecNumber>
    </recommendedName>
    <alternativeName>
        <fullName evidence="1">Holliday junction nuclease RuvC</fullName>
    </alternativeName>
    <alternativeName>
        <fullName evidence="1">Holliday junction resolvase RuvC</fullName>
    </alternativeName>
</protein>
<comment type="function">
    <text evidence="1">The RuvA-RuvB-RuvC complex processes Holliday junction (HJ) DNA during genetic recombination and DNA repair. Endonuclease that resolves HJ intermediates. Cleaves cruciform DNA by making single-stranded nicks across the HJ at symmetrical positions within the homologous arms, yielding a 5'-phosphate and a 3'-hydroxyl group; requires a central core of homology in the junction. The consensus cleavage sequence is 5'-(A/T)TT(C/G)-3'. Cleavage occurs on the 3'-side of the TT dinucleotide at the point of strand exchange. HJ branch migration catalyzed by RuvA-RuvB allows RuvC to scan DNA until it finds its consensus sequence, where it cleaves and resolves the cruciform DNA.</text>
</comment>
<comment type="catalytic activity">
    <reaction evidence="1">
        <text>Endonucleolytic cleavage at a junction such as a reciprocal single-stranded crossover between two homologous DNA duplexes (Holliday junction).</text>
        <dbReference type="EC" id="3.1.21.10"/>
    </reaction>
</comment>
<comment type="cofactor">
    <cofactor evidence="1">
        <name>Mg(2+)</name>
        <dbReference type="ChEBI" id="CHEBI:18420"/>
    </cofactor>
    <text evidence="1">Binds 2 Mg(2+) ion per subunit.</text>
</comment>
<comment type="subunit">
    <text evidence="1">Homodimer which binds Holliday junction (HJ) DNA. The HJ becomes 2-fold symmetrical on binding to RuvC with unstacked arms; it has a different conformation from HJ DNA in complex with RuvA. In the full resolvosome a probable DNA-RuvA(4)-RuvB(12)-RuvC(2) complex forms which resolves the HJ.</text>
</comment>
<comment type="subcellular location">
    <subcellularLocation>
        <location evidence="1">Cytoplasm</location>
    </subcellularLocation>
</comment>
<comment type="similarity">
    <text evidence="1">Belongs to the RuvC family.</text>
</comment>
<feature type="chain" id="PRO_1000002855" description="Crossover junction endodeoxyribonuclease RuvC">
    <location>
        <begin position="1"/>
        <end position="173"/>
    </location>
</feature>
<feature type="active site" evidence="1">
    <location>
        <position position="8"/>
    </location>
</feature>
<feature type="active site" evidence="1">
    <location>
        <position position="67"/>
    </location>
</feature>
<feature type="active site" evidence="1">
    <location>
        <position position="139"/>
    </location>
</feature>
<feature type="binding site" evidence="1">
    <location>
        <position position="8"/>
    </location>
    <ligand>
        <name>Mg(2+)</name>
        <dbReference type="ChEBI" id="CHEBI:18420"/>
        <label>1</label>
    </ligand>
</feature>
<feature type="binding site" evidence="1">
    <location>
        <position position="67"/>
    </location>
    <ligand>
        <name>Mg(2+)</name>
        <dbReference type="ChEBI" id="CHEBI:18420"/>
        <label>2</label>
    </ligand>
</feature>
<feature type="binding site" evidence="1">
    <location>
        <position position="139"/>
    </location>
    <ligand>
        <name>Mg(2+)</name>
        <dbReference type="ChEBI" id="CHEBI:18420"/>
        <label>1</label>
    </ligand>
</feature>
<dbReference type="EC" id="3.1.21.10" evidence="1"/>
<dbReference type="EMBL" id="AM286415">
    <property type="protein sequence ID" value="CAL12446.1"/>
    <property type="molecule type" value="Genomic_DNA"/>
</dbReference>
<dbReference type="RefSeq" id="WP_005169179.1">
    <property type="nucleotide sequence ID" value="NC_008800.1"/>
</dbReference>
<dbReference type="RefSeq" id="YP_001006613.1">
    <property type="nucleotide sequence ID" value="NC_008800.1"/>
</dbReference>
<dbReference type="SMR" id="A1JRK2"/>
<dbReference type="KEGG" id="yen:YE2394"/>
<dbReference type="PATRIC" id="fig|393305.7.peg.2548"/>
<dbReference type="eggNOG" id="COG0817">
    <property type="taxonomic scope" value="Bacteria"/>
</dbReference>
<dbReference type="HOGENOM" id="CLU_091257_2_1_6"/>
<dbReference type="OrthoDB" id="9805499at2"/>
<dbReference type="Proteomes" id="UP000000642">
    <property type="component" value="Chromosome"/>
</dbReference>
<dbReference type="GO" id="GO:0005737">
    <property type="term" value="C:cytoplasm"/>
    <property type="evidence" value="ECO:0007669"/>
    <property type="project" value="UniProtKB-SubCell"/>
</dbReference>
<dbReference type="GO" id="GO:0048476">
    <property type="term" value="C:Holliday junction resolvase complex"/>
    <property type="evidence" value="ECO:0007669"/>
    <property type="project" value="UniProtKB-UniRule"/>
</dbReference>
<dbReference type="GO" id="GO:0008821">
    <property type="term" value="F:crossover junction DNA endonuclease activity"/>
    <property type="evidence" value="ECO:0007669"/>
    <property type="project" value="UniProtKB-UniRule"/>
</dbReference>
<dbReference type="GO" id="GO:0003677">
    <property type="term" value="F:DNA binding"/>
    <property type="evidence" value="ECO:0007669"/>
    <property type="project" value="UniProtKB-KW"/>
</dbReference>
<dbReference type="GO" id="GO:0000287">
    <property type="term" value="F:magnesium ion binding"/>
    <property type="evidence" value="ECO:0007669"/>
    <property type="project" value="UniProtKB-UniRule"/>
</dbReference>
<dbReference type="GO" id="GO:0006310">
    <property type="term" value="P:DNA recombination"/>
    <property type="evidence" value="ECO:0007669"/>
    <property type="project" value="UniProtKB-UniRule"/>
</dbReference>
<dbReference type="GO" id="GO:0006281">
    <property type="term" value="P:DNA repair"/>
    <property type="evidence" value="ECO:0007669"/>
    <property type="project" value="UniProtKB-UniRule"/>
</dbReference>
<dbReference type="CDD" id="cd16962">
    <property type="entry name" value="RuvC"/>
    <property type="match status" value="1"/>
</dbReference>
<dbReference type="FunFam" id="3.30.420.10:FF:000002">
    <property type="entry name" value="Crossover junction endodeoxyribonuclease RuvC"/>
    <property type="match status" value="1"/>
</dbReference>
<dbReference type="Gene3D" id="3.30.420.10">
    <property type="entry name" value="Ribonuclease H-like superfamily/Ribonuclease H"/>
    <property type="match status" value="1"/>
</dbReference>
<dbReference type="HAMAP" id="MF_00034">
    <property type="entry name" value="RuvC"/>
    <property type="match status" value="1"/>
</dbReference>
<dbReference type="InterPro" id="IPR012337">
    <property type="entry name" value="RNaseH-like_sf"/>
</dbReference>
<dbReference type="InterPro" id="IPR036397">
    <property type="entry name" value="RNaseH_sf"/>
</dbReference>
<dbReference type="InterPro" id="IPR020563">
    <property type="entry name" value="X-over_junc_endoDNase_Mg_BS"/>
</dbReference>
<dbReference type="InterPro" id="IPR002176">
    <property type="entry name" value="X-over_junc_endoDNase_RuvC"/>
</dbReference>
<dbReference type="NCBIfam" id="TIGR00228">
    <property type="entry name" value="ruvC"/>
    <property type="match status" value="1"/>
</dbReference>
<dbReference type="PANTHER" id="PTHR30194">
    <property type="entry name" value="CROSSOVER JUNCTION ENDODEOXYRIBONUCLEASE RUVC"/>
    <property type="match status" value="1"/>
</dbReference>
<dbReference type="PANTHER" id="PTHR30194:SF3">
    <property type="entry name" value="CROSSOVER JUNCTION ENDODEOXYRIBONUCLEASE RUVC"/>
    <property type="match status" value="1"/>
</dbReference>
<dbReference type="Pfam" id="PF02075">
    <property type="entry name" value="RuvC"/>
    <property type="match status" value="1"/>
</dbReference>
<dbReference type="PRINTS" id="PR00696">
    <property type="entry name" value="RSOLVASERUVC"/>
</dbReference>
<dbReference type="SUPFAM" id="SSF53098">
    <property type="entry name" value="Ribonuclease H-like"/>
    <property type="match status" value="1"/>
</dbReference>
<dbReference type="PROSITE" id="PS01321">
    <property type="entry name" value="RUVC"/>
    <property type="match status" value="1"/>
</dbReference>
<proteinExistence type="inferred from homology"/>
<reference key="1">
    <citation type="journal article" date="2006" name="PLoS Genet.">
        <title>The complete genome sequence and comparative genome analysis of the high pathogenicity Yersinia enterocolitica strain 8081.</title>
        <authorList>
            <person name="Thomson N.R."/>
            <person name="Howard S."/>
            <person name="Wren B.W."/>
            <person name="Holden M.T.G."/>
            <person name="Crossman L."/>
            <person name="Challis G.L."/>
            <person name="Churcher C."/>
            <person name="Mungall K."/>
            <person name="Brooks K."/>
            <person name="Chillingworth T."/>
            <person name="Feltwell T."/>
            <person name="Abdellah Z."/>
            <person name="Hauser H."/>
            <person name="Jagels K."/>
            <person name="Maddison M."/>
            <person name="Moule S."/>
            <person name="Sanders M."/>
            <person name="Whitehead S."/>
            <person name="Quail M.A."/>
            <person name="Dougan G."/>
            <person name="Parkhill J."/>
            <person name="Prentice M.B."/>
        </authorList>
    </citation>
    <scope>NUCLEOTIDE SEQUENCE [LARGE SCALE GENOMIC DNA]</scope>
    <source>
        <strain>NCTC 13174 / 8081</strain>
    </source>
</reference>
<keyword id="KW-0963">Cytoplasm</keyword>
<keyword id="KW-0227">DNA damage</keyword>
<keyword id="KW-0233">DNA recombination</keyword>
<keyword id="KW-0234">DNA repair</keyword>
<keyword id="KW-0238">DNA-binding</keyword>
<keyword id="KW-0255">Endonuclease</keyword>
<keyword id="KW-0378">Hydrolase</keyword>
<keyword id="KW-0460">Magnesium</keyword>
<keyword id="KW-0479">Metal-binding</keyword>
<keyword id="KW-0540">Nuclease</keyword>
<sequence length="173" mass="18623">MAIVLGIDPGSRVTGYGVIRQQGRQLTYLGSGCIRTVVDDMPTRLKLIYAGVTEIITQFQPDFFAIEQVFMAKNPDSALKLGQARGAAIVAAVNLNLPVSEYAARQVKQTVVGTGAAEKSQVQHMVRSLLQLPANPQADAADALAIAITHCHLSQNTLRLGNDQMVLARGRLR</sequence>
<accession>A1JRK2</accession>
<name>RUVC_YERE8</name>
<evidence type="ECO:0000255" key="1">
    <source>
        <dbReference type="HAMAP-Rule" id="MF_00034"/>
    </source>
</evidence>
<organism>
    <name type="scientific">Yersinia enterocolitica serotype O:8 / biotype 1B (strain NCTC 13174 / 8081)</name>
    <dbReference type="NCBI Taxonomy" id="393305"/>
    <lineage>
        <taxon>Bacteria</taxon>
        <taxon>Pseudomonadati</taxon>
        <taxon>Pseudomonadota</taxon>
        <taxon>Gammaproteobacteria</taxon>
        <taxon>Enterobacterales</taxon>
        <taxon>Yersiniaceae</taxon>
        <taxon>Yersinia</taxon>
    </lineage>
</organism>